<gene>
    <name type="primary">WCRKC2</name>
    <name type="ordered locus">At5g04260</name>
    <name type="ORF">F21E1_180</name>
</gene>
<sequence>MSEIVNLSSSLRSLNPKISPLVPPYRQTSSSFSRPRNFKYHSFTDKICLAAERIRAVDIQKQDGGLQELDDSPVSVELGPICGESHFDQVMEDAQKLGESVVIVWMAAWCRKCIYLKPKLEKLAAEFYPRLRFYHVDVNAVPYRLVSRAGVTKMPTIQLWRDGQKQAEVIGGHKAHFVVNEVREMIENDSIT</sequence>
<comment type="function">
    <text>Probable thiol-disulfide oxidoreductase that may participate in various redox reactions.</text>
</comment>
<comment type="subcellular location">
    <subcellularLocation>
        <location evidence="3">Plastid</location>
        <location evidence="3">Chloroplast stroma</location>
    </subcellularLocation>
</comment>
<comment type="similarity">
    <text evidence="4">Belongs to the thioredoxin family.</text>
</comment>
<comment type="caution">
    <text evidence="4">The active site contains a CRKC motif which differs from the conserved CGPC motif.</text>
</comment>
<comment type="sequence caution" evidence="4">
    <conflict type="erroneous gene model prediction">
        <sequence resource="EMBL-CDS" id="CAC05508"/>
    </conflict>
</comment>
<keyword id="KW-0150">Chloroplast</keyword>
<keyword id="KW-1015">Disulfide bond</keyword>
<keyword id="KW-0249">Electron transport</keyword>
<keyword id="KW-0934">Plastid</keyword>
<keyword id="KW-0676">Redox-active center</keyword>
<keyword id="KW-1185">Reference proteome</keyword>
<keyword id="KW-0809">Transit peptide</keyword>
<keyword id="KW-0813">Transport</keyword>
<organism>
    <name type="scientific">Arabidopsis thaliana</name>
    <name type="common">Mouse-ear cress</name>
    <dbReference type="NCBI Taxonomy" id="3702"/>
    <lineage>
        <taxon>Eukaryota</taxon>
        <taxon>Viridiplantae</taxon>
        <taxon>Streptophyta</taxon>
        <taxon>Embryophyta</taxon>
        <taxon>Tracheophyta</taxon>
        <taxon>Spermatophyta</taxon>
        <taxon>Magnoliopsida</taxon>
        <taxon>eudicotyledons</taxon>
        <taxon>Gunneridae</taxon>
        <taxon>Pentapetalae</taxon>
        <taxon>rosids</taxon>
        <taxon>malvids</taxon>
        <taxon>Brassicales</taxon>
        <taxon>Brassicaceae</taxon>
        <taxon>Camelineae</taxon>
        <taxon>Arabidopsis</taxon>
    </lineage>
</organism>
<dbReference type="EMBL" id="AL391716">
    <property type="protein sequence ID" value="CAC05508.1"/>
    <property type="status" value="ALT_SEQ"/>
    <property type="molecule type" value="Genomic_DNA"/>
</dbReference>
<dbReference type="EMBL" id="CP002688">
    <property type="protein sequence ID" value="AED90720.1"/>
    <property type="molecule type" value="Genomic_DNA"/>
</dbReference>
<dbReference type="EMBL" id="AY063850">
    <property type="protein sequence ID" value="AAL36206.1"/>
    <property type="molecule type" value="mRNA"/>
</dbReference>
<dbReference type="EMBL" id="AY117290">
    <property type="protein sequence ID" value="AAM51365.1"/>
    <property type="molecule type" value="mRNA"/>
</dbReference>
<dbReference type="RefSeq" id="NP_196046.2">
    <property type="nucleotide sequence ID" value="NM_120508.4"/>
</dbReference>
<dbReference type="SMR" id="Q8VZT6"/>
<dbReference type="FunCoup" id="Q8VZT6">
    <property type="interactions" value="560"/>
</dbReference>
<dbReference type="STRING" id="3702.Q8VZT6"/>
<dbReference type="PaxDb" id="3702-AT5G04260.1"/>
<dbReference type="ProteomicsDB" id="245237"/>
<dbReference type="EnsemblPlants" id="AT5G04260.1">
    <property type="protein sequence ID" value="AT5G04260.1"/>
    <property type="gene ID" value="AT5G04260"/>
</dbReference>
<dbReference type="GeneID" id="830305"/>
<dbReference type="Gramene" id="AT5G04260.1">
    <property type="protein sequence ID" value="AT5G04260.1"/>
    <property type="gene ID" value="AT5G04260"/>
</dbReference>
<dbReference type="KEGG" id="ath:AT5G04260"/>
<dbReference type="Araport" id="AT5G04260"/>
<dbReference type="TAIR" id="AT5G04260">
    <property type="gene designation" value="WCRKC2"/>
</dbReference>
<dbReference type="eggNOG" id="KOG0907">
    <property type="taxonomic scope" value="Eukaryota"/>
</dbReference>
<dbReference type="HOGENOM" id="CLU_120169_0_0_1"/>
<dbReference type="InParanoid" id="Q8VZT6"/>
<dbReference type="OMA" id="GPICGES"/>
<dbReference type="PhylomeDB" id="Q8VZT6"/>
<dbReference type="PRO" id="PR:Q8VZT6"/>
<dbReference type="Proteomes" id="UP000006548">
    <property type="component" value="Chromosome 5"/>
</dbReference>
<dbReference type="ExpressionAtlas" id="Q8VZT6">
    <property type="expression patterns" value="baseline and differential"/>
</dbReference>
<dbReference type="GO" id="GO:0009570">
    <property type="term" value="C:chloroplast stroma"/>
    <property type="evidence" value="ECO:0000314"/>
    <property type="project" value="TAIR"/>
</dbReference>
<dbReference type="GO" id="GO:0045454">
    <property type="term" value="P:cell redox homeostasis"/>
    <property type="evidence" value="ECO:0000314"/>
    <property type="project" value="TAIR"/>
</dbReference>
<dbReference type="CDD" id="cd02947">
    <property type="entry name" value="TRX_family"/>
    <property type="match status" value="1"/>
</dbReference>
<dbReference type="FunFam" id="3.40.30.10:FF:000245">
    <property type="entry name" value="Thioredoxin"/>
    <property type="match status" value="1"/>
</dbReference>
<dbReference type="Gene3D" id="3.40.30.10">
    <property type="entry name" value="Glutaredoxin"/>
    <property type="match status" value="1"/>
</dbReference>
<dbReference type="InterPro" id="IPR036249">
    <property type="entry name" value="Thioredoxin-like_sf"/>
</dbReference>
<dbReference type="InterPro" id="IPR013766">
    <property type="entry name" value="Thioredoxin_domain"/>
</dbReference>
<dbReference type="InterPro" id="IPR044253">
    <property type="entry name" value="WCRKC1/2"/>
</dbReference>
<dbReference type="PANTHER" id="PTHR47192">
    <property type="entry name" value="THIOREDOXIN-LIKE 3-2, CHLOROPLASTIC"/>
    <property type="match status" value="1"/>
</dbReference>
<dbReference type="PANTHER" id="PTHR47192:SF4">
    <property type="entry name" value="THIOREDOXIN-LIKE 3-2, CHLOROPLASTIC"/>
    <property type="match status" value="1"/>
</dbReference>
<dbReference type="Pfam" id="PF00085">
    <property type="entry name" value="Thioredoxin"/>
    <property type="match status" value="1"/>
</dbReference>
<dbReference type="SUPFAM" id="SSF52833">
    <property type="entry name" value="Thioredoxin-like"/>
    <property type="match status" value="1"/>
</dbReference>
<dbReference type="PROSITE" id="PS51352">
    <property type="entry name" value="THIOREDOXIN_2"/>
    <property type="match status" value="1"/>
</dbReference>
<accession>Q8VZT6</accession>
<accession>Q9FYD5</accession>
<evidence type="ECO:0000255" key="1"/>
<evidence type="ECO:0000255" key="2">
    <source>
        <dbReference type="PROSITE-ProRule" id="PRU00691"/>
    </source>
</evidence>
<evidence type="ECO:0000269" key="3">
    <source>
    </source>
</evidence>
<evidence type="ECO:0000305" key="4"/>
<proteinExistence type="evidence at transcript level"/>
<name>TRL32_ARATH</name>
<protein>
    <recommendedName>
        <fullName>Thioredoxin-like 3-2, chloroplastic</fullName>
    </recommendedName>
    <alternativeName>
        <fullName>Thioredoxin WCRKC-2</fullName>
    </alternativeName>
</protein>
<feature type="transit peptide" description="Chloroplast" evidence="1">
    <location>
        <begin position="1"/>
        <end position="55"/>
    </location>
</feature>
<feature type="chain" id="PRO_0000034172" description="Thioredoxin-like 3-2, chloroplastic">
    <location>
        <begin position="56"/>
        <end position="192"/>
    </location>
</feature>
<feature type="domain" description="Thioredoxin" evidence="2">
    <location>
        <begin position="66"/>
        <end position="191"/>
    </location>
</feature>
<feature type="active site" description="Nucleophile" evidence="1">
    <location>
        <position position="110"/>
    </location>
</feature>
<feature type="active site" description="Nucleophile" evidence="1">
    <location>
        <position position="113"/>
    </location>
</feature>
<feature type="disulfide bond" description="Redox-active" evidence="2">
    <location>
        <begin position="110"/>
        <end position="113"/>
    </location>
</feature>
<reference key="1">
    <citation type="journal article" date="2000" name="Nature">
        <title>Sequence and analysis of chromosome 5 of the plant Arabidopsis thaliana.</title>
        <authorList>
            <person name="Tabata S."/>
            <person name="Kaneko T."/>
            <person name="Nakamura Y."/>
            <person name="Kotani H."/>
            <person name="Kato T."/>
            <person name="Asamizu E."/>
            <person name="Miyajima N."/>
            <person name="Sasamoto S."/>
            <person name="Kimura T."/>
            <person name="Hosouchi T."/>
            <person name="Kawashima K."/>
            <person name="Kohara M."/>
            <person name="Matsumoto M."/>
            <person name="Matsuno A."/>
            <person name="Muraki A."/>
            <person name="Nakayama S."/>
            <person name="Nakazaki N."/>
            <person name="Naruo K."/>
            <person name="Okumura S."/>
            <person name="Shinpo S."/>
            <person name="Takeuchi C."/>
            <person name="Wada T."/>
            <person name="Watanabe A."/>
            <person name="Yamada M."/>
            <person name="Yasuda M."/>
            <person name="Sato S."/>
            <person name="de la Bastide M."/>
            <person name="Huang E."/>
            <person name="Spiegel L."/>
            <person name="Gnoj L."/>
            <person name="O'Shaughnessy A."/>
            <person name="Preston R."/>
            <person name="Habermann K."/>
            <person name="Murray J."/>
            <person name="Johnson D."/>
            <person name="Rohlfing T."/>
            <person name="Nelson J."/>
            <person name="Stoneking T."/>
            <person name="Pepin K."/>
            <person name="Spieth J."/>
            <person name="Sekhon M."/>
            <person name="Armstrong J."/>
            <person name="Becker M."/>
            <person name="Belter E."/>
            <person name="Cordum H."/>
            <person name="Cordes M."/>
            <person name="Courtney L."/>
            <person name="Courtney W."/>
            <person name="Dante M."/>
            <person name="Du H."/>
            <person name="Edwards J."/>
            <person name="Fryman J."/>
            <person name="Haakensen B."/>
            <person name="Lamar E."/>
            <person name="Latreille P."/>
            <person name="Leonard S."/>
            <person name="Meyer R."/>
            <person name="Mulvaney E."/>
            <person name="Ozersky P."/>
            <person name="Riley A."/>
            <person name="Strowmatt C."/>
            <person name="Wagner-McPherson C."/>
            <person name="Wollam A."/>
            <person name="Yoakum M."/>
            <person name="Bell M."/>
            <person name="Dedhia N."/>
            <person name="Parnell L."/>
            <person name="Shah R."/>
            <person name="Rodriguez M."/>
            <person name="Hoon See L."/>
            <person name="Vil D."/>
            <person name="Baker J."/>
            <person name="Kirchoff K."/>
            <person name="Toth K."/>
            <person name="King L."/>
            <person name="Bahret A."/>
            <person name="Miller B."/>
            <person name="Marra M.A."/>
            <person name="Martienssen R."/>
            <person name="McCombie W.R."/>
            <person name="Wilson R.K."/>
            <person name="Murphy G."/>
            <person name="Bancroft I."/>
            <person name="Volckaert G."/>
            <person name="Wambutt R."/>
            <person name="Duesterhoeft A."/>
            <person name="Stiekema W."/>
            <person name="Pohl T."/>
            <person name="Entian K.-D."/>
            <person name="Terryn N."/>
            <person name="Hartley N."/>
            <person name="Bent E."/>
            <person name="Johnson S."/>
            <person name="Langham S.-A."/>
            <person name="McCullagh B."/>
            <person name="Robben J."/>
            <person name="Grymonprez B."/>
            <person name="Zimmermann W."/>
            <person name="Ramsperger U."/>
            <person name="Wedler H."/>
            <person name="Balke K."/>
            <person name="Wedler E."/>
            <person name="Peters S."/>
            <person name="van Staveren M."/>
            <person name="Dirkse W."/>
            <person name="Mooijman P."/>
            <person name="Klein Lankhorst R."/>
            <person name="Weitzenegger T."/>
            <person name="Bothe G."/>
            <person name="Rose M."/>
            <person name="Hauf J."/>
            <person name="Berneiser S."/>
            <person name="Hempel S."/>
            <person name="Feldpausch M."/>
            <person name="Lamberth S."/>
            <person name="Villarroel R."/>
            <person name="Gielen J."/>
            <person name="Ardiles W."/>
            <person name="Bents O."/>
            <person name="Lemcke K."/>
            <person name="Kolesov G."/>
            <person name="Mayer K.F.X."/>
            <person name="Rudd S."/>
            <person name="Schoof H."/>
            <person name="Schueller C."/>
            <person name="Zaccaria P."/>
            <person name="Mewes H.-W."/>
            <person name="Bevan M."/>
            <person name="Fransz P.F."/>
        </authorList>
    </citation>
    <scope>NUCLEOTIDE SEQUENCE [LARGE SCALE GENOMIC DNA]</scope>
    <source>
        <strain>cv. Columbia</strain>
    </source>
</reference>
<reference key="2">
    <citation type="journal article" date="2017" name="Plant J.">
        <title>Araport11: a complete reannotation of the Arabidopsis thaliana reference genome.</title>
        <authorList>
            <person name="Cheng C.Y."/>
            <person name="Krishnakumar V."/>
            <person name="Chan A.P."/>
            <person name="Thibaud-Nissen F."/>
            <person name="Schobel S."/>
            <person name="Town C.D."/>
        </authorList>
    </citation>
    <scope>GENOME REANNOTATION</scope>
    <source>
        <strain>cv. Columbia</strain>
    </source>
</reference>
<reference key="3">
    <citation type="journal article" date="2003" name="Science">
        <title>Empirical analysis of transcriptional activity in the Arabidopsis genome.</title>
        <authorList>
            <person name="Yamada K."/>
            <person name="Lim J."/>
            <person name="Dale J.M."/>
            <person name="Chen H."/>
            <person name="Shinn P."/>
            <person name="Palm C.J."/>
            <person name="Southwick A.M."/>
            <person name="Wu H.C."/>
            <person name="Kim C.J."/>
            <person name="Nguyen M."/>
            <person name="Pham P.K."/>
            <person name="Cheuk R.F."/>
            <person name="Karlin-Newmann G."/>
            <person name="Liu S.X."/>
            <person name="Lam B."/>
            <person name="Sakano H."/>
            <person name="Wu T."/>
            <person name="Yu G."/>
            <person name="Miranda M."/>
            <person name="Quach H.L."/>
            <person name="Tripp M."/>
            <person name="Chang C.H."/>
            <person name="Lee J.M."/>
            <person name="Toriumi M.J."/>
            <person name="Chan M.M."/>
            <person name="Tang C.C."/>
            <person name="Onodera C.S."/>
            <person name="Deng J.M."/>
            <person name="Akiyama K."/>
            <person name="Ansari Y."/>
            <person name="Arakawa T."/>
            <person name="Banh J."/>
            <person name="Banno F."/>
            <person name="Bowser L."/>
            <person name="Brooks S.Y."/>
            <person name="Carninci P."/>
            <person name="Chao Q."/>
            <person name="Choy N."/>
            <person name="Enju A."/>
            <person name="Goldsmith A.D."/>
            <person name="Gurjal M."/>
            <person name="Hansen N.F."/>
            <person name="Hayashizaki Y."/>
            <person name="Johnson-Hopson C."/>
            <person name="Hsuan V.W."/>
            <person name="Iida K."/>
            <person name="Karnes M."/>
            <person name="Khan S."/>
            <person name="Koesema E."/>
            <person name="Ishida J."/>
            <person name="Jiang P.X."/>
            <person name="Jones T."/>
            <person name="Kawai J."/>
            <person name="Kamiya A."/>
            <person name="Meyers C."/>
            <person name="Nakajima M."/>
            <person name="Narusaka M."/>
            <person name="Seki M."/>
            <person name="Sakurai T."/>
            <person name="Satou M."/>
            <person name="Tamse R."/>
            <person name="Vaysberg M."/>
            <person name="Wallender E.K."/>
            <person name="Wong C."/>
            <person name="Yamamura Y."/>
            <person name="Yuan S."/>
            <person name="Shinozaki K."/>
            <person name="Davis R.W."/>
            <person name="Theologis A."/>
            <person name="Ecker J.R."/>
        </authorList>
    </citation>
    <scope>NUCLEOTIDE SEQUENCE [LARGE SCALE MRNA]</scope>
    <source>
        <strain>cv. Columbia</strain>
    </source>
</reference>
<reference key="4">
    <citation type="journal article" date="2009" name="Mol. Plant">
        <title>Comparative genomic study of the thioredoxin family in photosynthetic organisms with emphasis on Populus trichocarpa.</title>
        <authorList>
            <person name="Chibani K."/>
            <person name="Wingsle G."/>
            <person name="Jacquot J.P."/>
            <person name="Gelhaye E."/>
            <person name="Rouhier N."/>
        </authorList>
    </citation>
    <scope>GENE FAMILY</scope>
    <scope>NOMENCLATURE</scope>
</reference>
<reference key="5">
    <citation type="journal article" date="2009" name="Plant Mol. Biol.">
        <title>A novel extended family of stromal thioredoxins.</title>
        <authorList>
            <person name="Cain P."/>
            <person name="Hall M."/>
            <person name="Schroder W.P."/>
            <person name="Kieselbach T."/>
            <person name="Robinson C."/>
        </authorList>
    </citation>
    <scope>SUBCELLULAR LOCATION</scope>
</reference>